<reference key="1">
    <citation type="journal article" date="1992" name="Mol. Microbiol.">
        <title>Mip protein of Legionella pneumophila exhibits peptidyl-prolyl-cis/trans isomerase (PPlase) activity.</title>
        <authorList>
            <person name="Fischer G."/>
            <person name="Bang H."/>
            <person name="Ludwig B."/>
            <person name="Mann K."/>
            <person name="Hacker J."/>
        </authorList>
    </citation>
    <scope>NUCLEOTIDE SEQUENCE [GENOMIC DNA]</scope>
    <scope>PROTEIN SEQUENCE OF 21-40</scope>
    <scope>PPIASE ACTIVITY</scope>
</reference>
<reference key="2">
    <citation type="journal article" date="2004" name="Science">
        <title>The genomic sequence of the accidental pathogen Legionella pneumophila.</title>
        <authorList>
            <person name="Chien M."/>
            <person name="Morozova I."/>
            <person name="Shi S."/>
            <person name="Sheng H."/>
            <person name="Chen J."/>
            <person name="Gomez S.M."/>
            <person name="Asamani G."/>
            <person name="Hill K."/>
            <person name="Nuara J."/>
            <person name="Feder M."/>
            <person name="Rineer J."/>
            <person name="Greenberg J.J."/>
            <person name="Steshenko V."/>
            <person name="Park S.H."/>
            <person name="Zhao B."/>
            <person name="Teplitskaya E."/>
            <person name="Edwards J.R."/>
            <person name="Pampou S."/>
            <person name="Georghiou A."/>
            <person name="Chou I.-C."/>
            <person name="Iannuccilli W."/>
            <person name="Ulz M.E."/>
            <person name="Kim D.H."/>
            <person name="Geringer-Sameth A."/>
            <person name="Goldsberry C."/>
            <person name="Morozov P."/>
            <person name="Fischer S.G."/>
            <person name="Segal G."/>
            <person name="Qu X."/>
            <person name="Rzhetsky A."/>
            <person name="Zhang P."/>
            <person name="Cayanis E."/>
            <person name="De Jong P.J."/>
            <person name="Ju J."/>
            <person name="Kalachikov S."/>
            <person name="Shuman H.A."/>
            <person name="Russo J.J."/>
        </authorList>
    </citation>
    <scope>NUCLEOTIDE SEQUENCE [LARGE SCALE GENOMIC DNA]</scope>
    <source>
        <strain>Philadelphia 1 / ATCC 33152 / DSM 7513</strain>
    </source>
</reference>
<reference key="3">
    <citation type="journal article" date="2001" name="Nat. Struct. Biol.">
        <title>Crystal structure of Mip, a prolylisomerase from Legionella pneumophila.</title>
        <authorList>
            <person name="Riboldi-Tunnicliffe A."/>
            <person name="Konig B."/>
            <person name="Jessen S."/>
            <person name="Weiss M.S."/>
            <person name="Rahfeld J."/>
            <person name="Hacker J."/>
            <person name="Fischer G."/>
            <person name="Hilgenfeld R."/>
        </authorList>
    </citation>
    <scope>X-RAY CRYSTALLOGRAPHY (2.4 ANGSTROMS) OF 21-233</scope>
</reference>
<feature type="signal peptide" evidence="2">
    <location>
        <begin position="1"/>
        <end position="20"/>
    </location>
</feature>
<feature type="chain" id="PRO_0000025533" description="Outer membrane protein MIP">
    <location>
        <begin position="21"/>
        <end position="233"/>
    </location>
</feature>
<feature type="domain" description="PPIase FKBP-type" evidence="1">
    <location>
        <begin position="144"/>
        <end position="233"/>
    </location>
</feature>
<feature type="helix" evidence="4">
    <location>
        <begin position="30"/>
        <end position="48"/>
    </location>
</feature>
<feature type="helix" evidence="4">
    <location>
        <begin position="55"/>
        <end position="67"/>
    </location>
</feature>
<feature type="helix" evidence="6">
    <location>
        <begin position="99"/>
        <end position="115"/>
    </location>
</feature>
<feature type="strand" evidence="4">
    <location>
        <begin position="121"/>
        <end position="123"/>
    </location>
</feature>
<feature type="strand" evidence="6">
    <location>
        <begin position="129"/>
        <end position="134"/>
    </location>
</feature>
<feature type="strand" evidence="6">
    <location>
        <begin position="146"/>
        <end position="155"/>
    </location>
</feature>
<feature type="strand" evidence="6">
    <location>
        <begin position="160"/>
        <end position="163"/>
    </location>
</feature>
<feature type="strand" evidence="6">
    <location>
        <begin position="167"/>
        <end position="169"/>
    </location>
</feature>
<feature type="strand" evidence="6">
    <location>
        <begin position="171"/>
        <end position="174"/>
    </location>
</feature>
<feature type="helix" evidence="6">
    <location>
        <begin position="175"/>
        <end position="177"/>
    </location>
</feature>
<feature type="helix" evidence="6">
    <location>
        <begin position="180"/>
        <end position="188"/>
    </location>
</feature>
<feature type="strand" evidence="6">
    <location>
        <begin position="194"/>
        <end position="199"/>
    </location>
</feature>
<feature type="helix" evidence="6">
    <location>
        <begin position="201"/>
        <end position="203"/>
    </location>
</feature>
<feature type="turn" evidence="5">
    <location>
        <begin position="204"/>
        <end position="207"/>
    </location>
</feature>
<feature type="strand" evidence="5">
    <location>
        <begin position="212"/>
        <end position="214"/>
    </location>
</feature>
<feature type="strand" evidence="6">
    <location>
        <begin position="220"/>
        <end position="230"/>
    </location>
</feature>
<gene>
    <name type="primary">mip</name>
    <name type="ordered locus">lpg0791</name>
</gene>
<evidence type="ECO:0000255" key="1">
    <source>
        <dbReference type="PROSITE-ProRule" id="PRU00277"/>
    </source>
</evidence>
<evidence type="ECO:0000269" key="2">
    <source>
    </source>
</evidence>
<evidence type="ECO:0000305" key="3"/>
<evidence type="ECO:0007829" key="4">
    <source>
        <dbReference type="PDB" id="8BJC"/>
    </source>
</evidence>
<evidence type="ECO:0007829" key="5">
    <source>
        <dbReference type="PDB" id="8BJE"/>
    </source>
</evidence>
<evidence type="ECO:0007829" key="6">
    <source>
        <dbReference type="PDB" id="8BK5"/>
    </source>
</evidence>
<proteinExistence type="evidence at protein level"/>
<accession>Q5ZXE0</accession>
<accession>P20380</accession>
<sequence length="233" mass="24881">MKMKLVTAAVMGLAMSTAMAATDATSLATDKDKLSYSIGADLGKNFKNQGIDVNPEAMAKGMQDAMSGAQLALTEQQMKDVLNKFQKDLMAKRTAEFNKKADENKVKGEAFLTENKNKPGVVVLPSGLQYKVINSGNGVKPGKSDTVTVEYTGRLIDGTVFDSTEKTGKPATFQVSQVIPGWTEALQLMPAGSTWEIYVPSGLAYGPRSVGGPIGPNETLIFKIHLISVKKSS</sequence>
<name>MIP_LEGPH</name>
<protein>
    <recommendedName>
        <fullName>Outer membrane protein MIP</fullName>
        <ecNumber>5.2.1.8</ecNumber>
    </recommendedName>
    <alternativeName>
        <fullName>Macrophage infectivity potentiator</fullName>
    </alternativeName>
    <alternativeName>
        <fullName>Peptidyl-prolyl cis-trans isomerase</fullName>
        <shortName>PPIase</shortName>
    </alternativeName>
    <alternativeName>
        <fullName>Rotamase</fullName>
    </alternativeName>
</protein>
<comment type="function">
    <text>Essential virulence factor associated with macrophage infectivity. Exhibits PPIase activity.</text>
</comment>
<comment type="catalytic activity">
    <reaction>
        <text>[protein]-peptidylproline (omega=180) = [protein]-peptidylproline (omega=0)</text>
        <dbReference type="Rhea" id="RHEA:16237"/>
        <dbReference type="Rhea" id="RHEA-COMP:10747"/>
        <dbReference type="Rhea" id="RHEA-COMP:10748"/>
        <dbReference type="ChEBI" id="CHEBI:83833"/>
        <dbReference type="ChEBI" id="CHEBI:83834"/>
        <dbReference type="EC" id="5.2.1.8"/>
    </reaction>
</comment>
<comment type="activity regulation">
    <text>Strongly inhibited by FK506 but is completely resistant to cyclosporin A.</text>
</comment>
<comment type="subcellular location">
    <subcellularLocation>
        <location>Cell outer membrane</location>
    </subcellularLocation>
</comment>
<comment type="similarity">
    <text evidence="3">Belongs to the FKBP-type PPIase family.</text>
</comment>
<comment type="sequence caution" evidence="3">
    <conflict type="erroneous initiation">
        <sequence resource="EMBL-CDS" id="AAU26880"/>
    </conflict>
</comment>
<organism>
    <name type="scientific">Legionella pneumophila subsp. pneumophila (strain Philadelphia 1 / ATCC 33152 / DSM 7513)</name>
    <dbReference type="NCBI Taxonomy" id="272624"/>
    <lineage>
        <taxon>Bacteria</taxon>
        <taxon>Pseudomonadati</taxon>
        <taxon>Pseudomonadota</taxon>
        <taxon>Gammaproteobacteria</taxon>
        <taxon>Legionellales</taxon>
        <taxon>Legionellaceae</taxon>
        <taxon>Legionella</taxon>
    </lineage>
</organism>
<keyword id="KW-0002">3D-structure</keyword>
<keyword id="KW-0998">Cell outer membrane</keyword>
<keyword id="KW-0903">Direct protein sequencing</keyword>
<keyword id="KW-0413">Isomerase</keyword>
<keyword id="KW-0472">Membrane</keyword>
<keyword id="KW-1185">Reference proteome</keyword>
<keyword id="KW-0697">Rotamase</keyword>
<keyword id="KW-0732">Signal</keyword>
<keyword id="KW-0843">Virulence</keyword>
<dbReference type="EC" id="5.2.1.8"/>
<dbReference type="EMBL" id="S42595">
    <property type="protein sequence ID" value="AAB22717.1"/>
    <property type="molecule type" value="Genomic_DNA"/>
</dbReference>
<dbReference type="EMBL" id="AE017354">
    <property type="protein sequence ID" value="AAU26880.1"/>
    <property type="status" value="ALT_INIT"/>
    <property type="molecule type" value="Genomic_DNA"/>
</dbReference>
<dbReference type="RefSeq" id="WP_011213317.1">
    <property type="nucleotide sequence ID" value="NC_002942.5"/>
</dbReference>
<dbReference type="RefSeq" id="YP_094827.1">
    <property type="nucleotide sequence ID" value="NC_002942.5"/>
</dbReference>
<dbReference type="PDB" id="1FD9">
    <property type="method" value="X-ray"/>
    <property type="resolution" value="2.41 A"/>
    <property type="chains" value="A=21-233"/>
</dbReference>
<dbReference type="PDB" id="2UZ5">
    <property type="method" value="NMR"/>
    <property type="chains" value="A=97-233"/>
</dbReference>
<dbReference type="PDB" id="2VCD">
    <property type="method" value="NMR"/>
    <property type="chains" value="A=97-233"/>
</dbReference>
<dbReference type="PDB" id="8BJC">
    <property type="method" value="X-ray"/>
    <property type="resolution" value="1.71 A"/>
    <property type="chains" value="B=27-231"/>
</dbReference>
<dbReference type="PDB" id="8BJD">
    <property type="method" value="X-ray"/>
    <property type="resolution" value="2.40 A"/>
    <property type="chains" value="A=26-233"/>
</dbReference>
<dbReference type="PDB" id="8BJE">
    <property type="method" value="X-ray"/>
    <property type="resolution" value="1.49 A"/>
    <property type="chains" value="A=99-231"/>
</dbReference>
<dbReference type="PDB" id="8BK5">
    <property type="method" value="X-ray"/>
    <property type="resolution" value="1.44 A"/>
    <property type="chains" value="A=98-231"/>
</dbReference>
<dbReference type="PDB" id="8BK6">
    <property type="method" value="X-ray"/>
    <property type="resolution" value="2.26 A"/>
    <property type="chains" value="A/B=120-232"/>
</dbReference>
<dbReference type="PDBsum" id="1FD9"/>
<dbReference type="PDBsum" id="2UZ5"/>
<dbReference type="PDBsum" id="2VCD"/>
<dbReference type="PDBsum" id="8BJC"/>
<dbReference type="PDBsum" id="8BJD"/>
<dbReference type="PDBsum" id="8BJE"/>
<dbReference type="PDBsum" id="8BK5"/>
<dbReference type="PDBsum" id="8BK6"/>
<dbReference type="BMRB" id="Q5ZXE0"/>
<dbReference type="SASBDB" id="Q5ZXE0"/>
<dbReference type="SMR" id="Q5ZXE0"/>
<dbReference type="STRING" id="272624.lpg0791"/>
<dbReference type="PaxDb" id="272624-lpg0791"/>
<dbReference type="GeneID" id="57034781"/>
<dbReference type="KEGG" id="lpn:lpg0791"/>
<dbReference type="PATRIC" id="fig|272624.6.peg.819"/>
<dbReference type="eggNOG" id="COG0545">
    <property type="taxonomic scope" value="Bacteria"/>
</dbReference>
<dbReference type="HOGENOM" id="CLU_013615_0_1_6"/>
<dbReference type="OrthoDB" id="9814548at2"/>
<dbReference type="EvolutionaryTrace" id="Q5ZXE0"/>
<dbReference type="Proteomes" id="UP000000609">
    <property type="component" value="Chromosome"/>
</dbReference>
<dbReference type="GO" id="GO:0009279">
    <property type="term" value="C:cell outer membrane"/>
    <property type="evidence" value="ECO:0007669"/>
    <property type="project" value="UniProtKB-SubCell"/>
</dbReference>
<dbReference type="GO" id="GO:0003755">
    <property type="term" value="F:peptidyl-prolyl cis-trans isomerase activity"/>
    <property type="evidence" value="ECO:0007669"/>
    <property type="project" value="UniProtKB-KW"/>
</dbReference>
<dbReference type="GO" id="GO:0006457">
    <property type="term" value="P:protein folding"/>
    <property type="evidence" value="ECO:0007669"/>
    <property type="project" value="InterPro"/>
</dbReference>
<dbReference type="Gene3D" id="3.10.50.40">
    <property type="match status" value="1"/>
</dbReference>
<dbReference type="Gene3D" id="1.10.287.460">
    <property type="entry name" value="Peptidyl-prolyl cis-trans isomerase, FKBP-type, N-terminal domain"/>
    <property type="match status" value="1"/>
</dbReference>
<dbReference type="InterPro" id="IPR008104">
    <property type="entry name" value="INFPOTNTIATR"/>
</dbReference>
<dbReference type="InterPro" id="IPR046357">
    <property type="entry name" value="PPIase_dom_sf"/>
</dbReference>
<dbReference type="InterPro" id="IPR001179">
    <property type="entry name" value="PPIase_FKBP_dom"/>
</dbReference>
<dbReference type="InterPro" id="IPR000774">
    <property type="entry name" value="PPIase_FKBP_N"/>
</dbReference>
<dbReference type="InterPro" id="IPR036944">
    <property type="entry name" value="PPIase_FKBP_N_sf"/>
</dbReference>
<dbReference type="PANTHER" id="PTHR43811">
    <property type="entry name" value="FKBP-TYPE PEPTIDYL-PROLYL CIS-TRANS ISOMERASE FKPA"/>
    <property type="match status" value="1"/>
</dbReference>
<dbReference type="PANTHER" id="PTHR43811:SF57">
    <property type="entry name" value="FKBP-TYPE PEPTIDYL-PROLYL CIS-TRANS ISOMERASE FKPA-RELATED"/>
    <property type="match status" value="1"/>
</dbReference>
<dbReference type="Pfam" id="PF00254">
    <property type="entry name" value="FKBP_C"/>
    <property type="match status" value="1"/>
</dbReference>
<dbReference type="Pfam" id="PF01346">
    <property type="entry name" value="FKBP_N"/>
    <property type="match status" value="1"/>
</dbReference>
<dbReference type="PRINTS" id="PR01730">
    <property type="entry name" value="INFPOTNTIATR"/>
</dbReference>
<dbReference type="SUPFAM" id="SSF54534">
    <property type="entry name" value="FKBP-like"/>
    <property type="match status" value="1"/>
</dbReference>
<dbReference type="PROSITE" id="PS50059">
    <property type="entry name" value="FKBP_PPIASE"/>
    <property type="match status" value="1"/>
</dbReference>